<proteinExistence type="evidence at protein level"/>
<accession>Q6XDB5</accession>
<accession>C0PT91</accession>
<protein>
    <recommendedName>
        <fullName evidence="6">(-)-alpha-pinene synthase 2, chloroplastic</fullName>
        <ecNumber evidence="4">4.2.3.119</ecNumber>
    </recommendedName>
    <alternativeName>
        <fullName evidence="6">(-)-(1S,5S)-pinene synthase</fullName>
    </alternativeName>
    <alternativeName>
        <fullName evidence="6">(-)-beta-pinene synthase 2</fullName>
        <ecNumber evidence="4">4.2.3.120</ecNumber>
    </alternativeName>
    <alternativeName>
        <fullName>Beta-geraniolene synthase</fullName>
    </alternativeName>
    <alternativeName>
        <fullName evidence="6">Pinene synthase, chloroplastic</fullName>
        <shortName>PsTPS2</shortName>
    </alternativeName>
</protein>
<feature type="transit peptide" description="Chloroplast" evidence="3">
    <location>
        <begin position="1"/>
        <end position="36"/>
    </location>
</feature>
<feature type="chain" id="PRO_0000401484" description="(-)-alpha-pinene synthase 2, chloroplastic">
    <location>
        <begin position="37"/>
        <end position="627"/>
    </location>
</feature>
<feature type="short sequence motif" description="DDXXD motif" evidence="1">
    <location>
        <begin position="378"/>
        <end position="382"/>
    </location>
</feature>
<feature type="binding site" evidence="2">
    <location>
        <position position="378"/>
    </location>
    <ligand>
        <name>Mg(2+)</name>
        <dbReference type="ChEBI" id="CHEBI:18420"/>
        <label>1</label>
    </ligand>
</feature>
<feature type="binding site" evidence="2">
    <location>
        <position position="378"/>
    </location>
    <ligand>
        <name>Mg(2+)</name>
        <dbReference type="ChEBI" id="CHEBI:18420"/>
        <label>2</label>
    </ligand>
</feature>
<feature type="binding site" evidence="2">
    <location>
        <position position="382"/>
    </location>
    <ligand>
        <name>Mg(2+)</name>
        <dbReference type="ChEBI" id="CHEBI:18420"/>
        <label>1</label>
    </ligand>
</feature>
<feature type="binding site" evidence="2">
    <location>
        <position position="382"/>
    </location>
    <ligand>
        <name>Mg(2+)</name>
        <dbReference type="ChEBI" id="CHEBI:18420"/>
        <label>2</label>
    </ligand>
</feature>
<feature type="binding site" evidence="2">
    <location>
        <position position="530"/>
    </location>
    <ligand>
        <name>Mg(2+)</name>
        <dbReference type="ChEBI" id="CHEBI:18420"/>
        <label>3</label>
    </ligand>
</feature>
<feature type="mutagenesis site" description="30% decrease in monoterpene synthase activity." evidence="5">
    <original>S</original>
    <variation>A</variation>
    <location>
        <position position="538"/>
    </location>
</feature>
<feature type="mutagenesis site" description="8-fold higher monoterpene synthase activity in absence of potassium, and loss of dependence on potassium." evidence="5">
    <original>S</original>
    <variation>K</variation>
    <location>
        <position position="538"/>
    </location>
</feature>
<feature type="sequence conflict" description="In Ref. 2; ACN41031." evidence="7" ref="2">
    <original>VAPMASR</original>
    <variation>IAPLASK</variation>
    <location>
        <begin position="6"/>
        <end position="12"/>
    </location>
</feature>
<feature type="sequence conflict" description="In Ref. 2; ACN41031." evidence="7" ref="2">
    <original>T</original>
    <variation>M</variation>
    <location>
        <position position="426"/>
    </location>
</feature>
<feature type="sequence conflict" description="In Ref. 2; ACN41031." evidence="7" ref="2">
    <original>R</original>
    <variation>K</variation>
    <location>
        <position position="618"/>
    </location>
</feature>
<reference key="1">
    <citation type="journal article" date="2003" name="Plant Physiol.">
        <title>Insect attack and wounding induce traumatic resin duct development and gene expression of (-)-pinene synthase in Sitka spruce.</title>
        <authorList>
            <person name="McKay S.A."/>
            <person name="Hunter W.L."/>
            <person name="Godard K.A."/>
            <person name="Wang S.X."/>
            <person name="Martin D.M."/>
            <person name="Bohlmann J."/>
            <person name="Plant A.L."/>
        </authorList>
    </citation>
    <scope>NUCLEOTIDE SEQUENCE [MRNA]</scope>
    <scope>FUNCTION</scope>
    <scope>CATALYTIC ACTIVITY</scope>
    <scope>INDUCTION BY WOUNDING AND INSECT ATTACK</scope>
    <scope>PATHWAY</scope>
</reference>
<reference key="2">
    <citation type="submission" date="2009-02" db="EMBL/GenBank/DDBJ databases">
        <title>Full length sequence-verified cDNA sequences from Sitka spruce (Picea sitchensis).</title>
        <authorList>
            <person name="Reid K.E."/>
            <person name="Liao N."/>
            <person name="Ralph S."/>
            <person name="Kolosova N."/>
            <person name="Oddy C."/>
            <person name="Moore R."/>
            <person name="Mayo M."/>
            <person name="Wagner S."/>
            <person name="King J."/>
            <person name="Yanchuk A."/>
            <person name="Holt R."/>
            <person name="Jones S."/>
            <person name="Marra M."/>
            <person name="Ritland C.E."/>
            <person name="Ritland K."/>
            <person name="Bohlmann J."/>
        </authorList>
    </citation>
    <scope>NUCLEOTIDE SEQUENCE [MRNA]</scope>
    <source>
        <tissue>Bark</tissue>
    </source>
</reference>
<reference key="3">
    <citation type="journal article" date="2009" name="J. Biol. Chem.">
        <title>Defining the potassium binding region in an apple terpene synthase.</title>
        <authorList>
            <person name="Green S."/>
            <person name="Squire C.J."/>
            <person name="Nieuwenhuizen N.J."/>
            <person name="Baker E.N."/>
            <person name="Laing W."/>
        </authorList>
    </citation>
    <scope>MUTAGENESIS OF SER-538</scope>
</reference>
<sequence length="627" mass="71384">MALVSVAPMASRSCLHKSLSSSAHELKTICRTIPTLGMSRRGKSATPSMSMSLTTTVSDDGVQRRMGDFHSNLWNDDFIQSLSTSYGEPSYRERAERLIGEVKKMFNSMSSEDGELISPHNDLIQRVWMVDSVERLGIERHFKNEIKSALDYVYSYWSEKGIGCGRESVVADLNSTALGFRTLRLHGYAVSADVLNLFKDQNGQFACSPSQTEEEIRSVLNLYRASLIAFPGEKVMEEAEIFSAKYLEESLQKISVSSLSQEIRDVLEYGWHTYLPRMEARNHIDVFGQDTQNSKSCINTEKLLELAKLEFNIFHSLQKRELEYLVRWWKDSGSPQMTFCRHRHVEYYTLASCIAFEPQHSGFRLGFAKACHIITILDDMYDTFGTVDELELFTAAMKRWDPSAADCLPEYMKGVYLILYDTVNETSREAEKAQGRDTLDYARRAWDDYLDSYMQEAKWIATGYLPTFAEYYENGKVSSGHRTSALQPILTMDIPFPPHILKEVDFPSKLNDLASAILRLRGDTRCYKADRARGEEASSISCYMKDNPGATEEDALDHINAMISDVIRGLNWELLNPNSSVPISSKKHVFDISRAFHYGYKYRDGYSVANIETKSLVRRTVIDPVTL</sequence>
<dbReference type="EC" id="4.2.3.119" evidence="4"/>
<dbReference type="EC" id="4.2.3.120" evidence="4"/>
<dbReference type="EMBL" id="AY237645">
    <property type="protein sequence ID" value="AAP72020.1"/>
    <property type="molecule type" value="mRNA"/>
</dbReference>
<dbReference type="EMBL" id="BT071578">
    <property type="protein sequence ID" value="ACN41031.1"/>
    <property type="molecule type" value="mRNA"/>
</dbReference>
<dbReference type="SMR" id="Q6XDB5"/>
<dbReference type="KEGG" id="ag:AAP72020"/>
<dbReference type="BRENDA" id="4.2.3.119">
    <property type="organism ID" value="8974"/>
</dbReference>
<dbReference type="BRENDA" id="4.2.3.120">
    <property type="organism ID" value="8974"/>
</dbReference>
<dbReference type="UniPathway" id="UPA00924"/>
<dbReference type="GO" id="GO:0009507">
    <property type="term" value="C:chloroplast"/>
    <property type="evidence" value="ECO:0007669"/>
    <property type="project" value="UniProtKB-SubCell"/>
</dbReference>
<dbReference type="GO" id="GO:0016829">
    <property type="term" value="F:lyase activity"/>
    <property type="evidence" value="ECO:0000314"/>
    <property type="project" value="UniProtKB"/>
</dbReference>
<dbReference type="GO" id="GO:0000287">
    <property type="term" value="F:magnesium ion binding"/>
    <property type="evidence" value="ECO:0007669"/>
    <property type="project" value="InterPro"/>
</dbReference>
<dbReference type="GO" id="GO:0050550">
    <property type="term" value="F:pinene synthase activity"/>
    <property type="evidence" value="ECO:0000314"/>
    <property type="project" value="UniProtKB"/>
</dbReference>
<dbReference type="GO" id="GO:0046248">
    <property type="term" value="P:alpha-pinene biosynthetic process"/>
    <property type="evidence" value="ECO:0000314"/>
    <property type="project" value="UniProtKB"/>
</dbReference>
<dbReference type="GO" id="GO:0016102">
    <property type="term" value="P:diterpenoid biosynthetic process"/>
    <property type="evidence" value="ECO:0007669"/>
    <property type="project" value="InterPro"/>
</dbReference>
<dbReference type="GO" id="GO:0010597">
    <property type="term" value="P:green leaf volatile biosynthetic process"/>
    <property type="evidence" value="ECO:0000314"/>
    <property type="project" value="UniProtKB"/>
</dbReference>
<dbReference type="GO" id="GO:0016099">
    <property type="term" value="P:monoterpenoid biosynthetic process"/>
    <property type="evidence" value="ECO:0000314"/>
    <property type="project" value="UniProtKB"/>
</dbReference>
<dbReference type="CDD" id="cd00684">
    <property type="entry name" value="Terpene_cyclase_plant_C1"/>
    <property type="match status" value="1"/>
</dbReference>
<dbReference type="FunFam" id="1.50.10.130:FF:000004">
    <property type="entry name" value="Carene synthase, chloroplastic"/>
    <property type="match status" value="1"/>
</dbReference>
<dbReference type="FunFam" id="1.10.600.10:FF:000005">
    <property type="entry name" value="Ent-kaur-16-ene synthase, chloroplastic"/>
    <property type="match status" value="1"/>
</dbReference>
<dbReference type="Gene3D" id="1.10.600.10">
    <property type="entry name" value="Farnesyl Diphosphate Synthase"/>
    <property type="match status" value="1"/>
</dbReference>
<dbReference type="Gene3D" id="1.50.10.130">
    <property type="entry name" value="Terpene synthase, N-terminal domain"/>
    <property type="match status" value="1"/>
</dbReference>
<dbReference type="InterPro" id="IPR008949">
    <property type="entry name" value="Isoprenoid_synthase_dom_sf"/>
</dbReference>
<dbReference type="InterPro" id="IPR034741">
    <property type="entry name" value="Terpene_cyclase-like_1_C"/>
</dbReference>
<dbReference type="InterPro" id="IPR044814">
    <property type="entry name" value="Terpene_cyclase_plant_C1"/>
</dbReference>
<dbReference type="InterPro" id="IPR001906">
    <property type="entry name" value="Terpene_synth_N"/>
</dbReference>
<dbReference type="InterPro" id="IPR036965">
    <property type="entry name" value="Terpene_synth_N_sf"/>
</dbReference>
<dbReference type="InterPro" id="IPR050148">
    <property type="entry name" value="Terpene_synthase-like"/>
</dbReference>
<dbReference type="InterPro" id="IPR005630">
    <property type="entry name" value="Terpene_synthase_metal-bd"/>
</dbReference>
<dbReference type="InterPro" id="IPR008930">
    <property type="entry name" value="Terpenoid_cyclase/PrenylTrfase"/>
</dbReference>
<dbReference type="PANTHER" id="PTHR31225">
    <property type="entry name" value="OS04G0344100 PROTEIN-RELATED"/>
    <property type="match status" value="1"/>
</dbReference>
<dbReference type="Pfam" id="PF01397">
    <property type="entry name" value="Terpene_synth"/>
    <property type="match status" value="1"/>
</dbReference>
<dbReference type="Pfam" id="PF03936">
    <property type="entry name" value="Terpene_synth_C"/>
    <property type="match status" value="1"/>
</dbReference>
<dbReference type="SFLD" id="SFLDS00005">
    <property type="entry name" value="Isoprenoid_Synthase_Type_I"/>
    <property type="match status" value="1"/>
</dbReference>
<dbReference type="SFLD" id="SFLDG01019">
    <property type="entry name" value="Terpene_Cyclase_Like_1_C_Termi"/>
    <property type="match status" value="1"/>
</dbReference>
<dbReference type="SFLD" id="SFLDG01014">
    <property type="entry name" value="Terpene_Cyclase_Like_1_N-term"/>
    <property type="match status" value="1"/>
</dbReference>
<dbReference type="SUPFAM" id="SSF48239">
    <property type="entry name" value="Terpenoid cyclases/Protein prenyltransferases"/>
    <property type="match status" value="1"/>
</dbReference>
<dbReference type="SUPFAM" id="SSF48576">
    <property type="entry name" value="Terpenoid synthases"/>
    <property type="match status" value="1"/>
</dbReference>
<evidence type="ECO:0000250" key="1">
    <source>
        <dbReference type="UniProtKB" id="A0A1C9J6A7"/>
    </source>
</evidence>
<evidence type="ECO:0000250" key="2">
    <source>
        <dbReference type="UniProtKB" id="Q40577"/>
    </source>
</evidence>
<evidence type="ECO:0000255" key="3"/>
<evidence type="ECO:0000269" key="4">
    <source>
    </source>
</evidence>
<evidence type="ECO:0000269" key="5">
    <source>
    </source>
</evidence>
<evidence type="ECO:0000303" key="6">
    <source>
    </source>
</evidence>
<evidence type="ECO:0000305" key="7"/>
<name>PINS2_PICSI</name>
<comment type="function">
    <text evidence="4">Involved in defensive oleoresin formation in conifers in response to insect attack or other injury. Involved in monoterpene (C10) olefins biosynthesis. A mixture of alpha- and beta-pinene (35:10) is produced by this enzyme.</text>
</comment>
<comment type="catalytic activity">
    <reaction evidence="4">
        <text>(2E)-geranyl diphosphate = (1S,5S)-alpha-pinene + diphosphate</text>
        <dbReference type="Rhea" id="RHEA:25488"/>
        <dbReference type="ChEBI" id="CHEBI:28660"/>
        <dbReference type="ChEBI" id="CHEBI:33019"/>
        <dbReference type="ChEBI" id="CHEBI:58057"/>
        <dbReference type="EC" id="4.2.3.119"/>
    </reaction>
</comment>
<comment type="catalytic activity">
    <reaction evidence="4">
        <text>(2E)-geranyl diphosphate = (1S,5S)-beta-pinene + diphosphate</text>
        <dbReference type="Rhea" id="RHEA:25496"/>
        <dbReference type="ChEBI" id="CHEBI:28359"/>
        <dbReference type="ChEBI" id="CHEBI:33019"/>
        <dbReference type="ChEBI" id="CHEBI:58057"/>
        <dbReference type="EC" id="4.2.3.120"/>
    </reaction>
</comment>
<comment type="cofactor">
    <cofactor evidence="1">
        <name>Mg(2+)</name>
        <dbReference type="ChEBI" id="CHEBI:18420"/>
    </cofactor>
    <cofactor evidence="1">
        <name>Mn(2+)</name>
        <dbReference type="ChEBI" id="CHEBI:29035"/>
    </cofactor>
    <text evidence="1">Binds 3 Mg(2+) or Mn(2+) ions per subunit.</text>
</comment>
<comment type="pathway">
    <text evidence="4">Terpene metabolism; oleoresin biosynthesis.</text>
</comment>
<comment type="subcellular location">
    <subcellularLocation>
        <location evidence="7">Plastid</location>
        <location evidence="7">Chloroplast</location>
    </subcellularLocation>
</comment>
<comment type="induction">
    <text evidence="4">By wounding and insect attack.</text>
</comment>
<comment type="domain">
    <text evidence="1">The Asp-Asp-Xaa-Xaa-Asp/Glu (DDXXD/E) motif is important for the catalytic activity, presumably through binding to Mg(2+).</text>
</comment>
<comment type="similarity">
    <text evidence="7">Belongs to the terpene synthase family. Tpsd subfamily.</text>
</comment>
<keyword id="KW-0150">Chloroplast</keyword>
<keyword id="KW-0456">Lyase</keyword>
<keyword id="KW-0460">Magnesium</keyword>
<keyword id="KW-0464">Manganese</keyword>
<keyword id="KW-0479">Metal-binding</keyword>
<keyword id="KW-0934">Plastid</keyword>
<keyword id="KW-0809">Transit peptide</keyword>
<organism>
    <name type="scientific">Picea sitchensis</name>
    <name type="common">Sitka spruce</name>
    <name type="synonym">Pinus sitchensis</name>
    <dbReference type="NCBI Taxonomy" id="3332"/>
    <lineage>
        <taxon>Eukaryota</taxon>
        <taxon>Viridiplantae</taxon>
        <taxon>Streptophyta</taxon>
        <taxon>Embryophyta</taxon>
        <taxon>Tracheophyta</taxon>
        <taxon>Spermatophyta</taxon>
        <taxon>Pinopsida</taxon>
        <taxon>Pinidae</taxon>
        <taxon>Conifers I</taxon>
        <taxon>Pinales</taxon>
        <taxon>Pinaceae</taxon>
        <taxon>Picea</taxon>
    </lineage>
</organism>